<dbReference type="SMR" id="P0CU73"/>
<dbReference type="OMA" id="LLACIQW"/>
<dbReference type="OrthoDB" id="2410195at2759"/>
<dbReference type="GO" id="GO:0005634">
    <property type="term" value="C:nucleus"/>
    <property type="evidence" value="ECO:0007669"/>
    <property type="project" value="UniProtKB-SubCell"/>
</dbReference>
<dbReference type="GO" id="GO:0003677">
    <property type="term" value="F:DNA binding"/>
    <property type="evidence" value="ECO:0007669"/>
    <property type="project" value="UniProtKB-KW"/>
</dbReference>
<dbReference type="Gene3D" id="3.40.50.150">
    <property type="entry name" value="Vaccinia Virus protein VP39"/>
    <property type="match status" value="1"/>
</dbReference>
<dbReference type="Gene3D" id="1.10.10.10">
    <property type="entry name" value="Winged helix-like DNA-binding domain superfamily/Winged helix DNA-binding domain"/>
    <property type="match status" value="1"/>
</dbReference>
<dbReference type="InterPro" id="IPR029063">
    <property type="entry name" value="SAM-dependent_MTases_sf"/>
</dbReference>
<dbReference type="InterPro" id="IPR036388">
    <property type="entry name" value="WH-like_DNA-bd_sf"/>
</dbReference>
<dbReference type="InterPro" id="IPR036390">
    <property type="entry name" value="WH_DNA-bd_sf"/>
</dbReference>
<dbReference type="PANTHER" id="PTHR43712:SF15">
    <property type="entry name" value="MONODICTYPHENONE CLUSTER TRANSCRIPTIONAL COACTIVATOR MDPA"/>
    <property type="match status" value="1"/>
</dbReference>
<dbReference type="PANTHER" id="PTHR43712">
    <property type="entry name" value="PUTATIVE (AFU_ORTHOLOGUE AFUA_4G14580)-RELATED"/>
    <property type="match status" value="1"/>
</dbReference>
<dbReference type="SUPFAM" id="SSF46785">
    <property type="entry name" value="Winged helix' DNA-binding domain"/>
    <property type="match status" value="1"/>
</dbReference>
<feature type="chain" id="PRO_0000445893" description="Cladofulvin cluster transcriptional coactivator claA">
    <location>
        <begin position="1"/>
        <end position="411"/>
    </location>
</feature>
<feature type="domain" description="HTH iclR-type" evidence="1">
    <location>
        <begin position="47"/>
        <end position="117"/>
    </location>
</feature>
<feature type="DNA-binding region" description="H-T-H motif" evidence="1">
    <location>
        <begin position="77"/>
        <end position="96"/>
    </location>
</feature>
<feature type="region of interest" description="Disordered" evidence="2">
    <location>
        <begin position="1"/>
        <end position="32"/>
    </location>
</feature>
<feature type="compositionally biased region" description="Polar residues" evidence="2">
    <location>
        <begin position="1"/>
        <end position="27"/>
    </location>
</feature>
<name>CLAA_PASFU</name>
<sequence>MSDSLAGNGMRQNLNRSSTSSNHTGHAQNGRAPQDPLVDAGHFIKQLACQVQSLACLKWLSELQILACIPLEGSRPLHDVAELANVPASQLSRVVRIVATIGFLNEPDPGHIAHTALSAQFVVDFSLFDSILFLLTTVVPCSMQMSTLTQRHGSAFPTNDGAYRIAFNTSQSFDAACVEGSRLRREWLAYKSNTTIVDETIADVLLRQDWHSLGHVKVVDACAQSTDFGNSLAERCSTLRVVVQLDTATTNGHSEIDSSMSRGRAVIQRRPQGTRQMVEDAAVCILKIEAPSTTIRARVTAELLAHLEVLRNNESAVLIVAAPLLPEPGTVSTSAEASARSSDLTTLQLSNSPQLELDRLIDIVENVPNARDSLKVVQRILFRNGMVAAIEVRYRASSEDQFATPAGTIDW</sequence>
<protein>
    <recommendedName>
        <fullName evidence="6">Cladofulvin cluster transcriptional coactivator claA</fullName>
    </recommendedName>
    <alternativeName>
        <fullName evidence="6">Cladofulvin biosynthesis cluster protein A</fullName>
    </alternativeName>
</protein>
<organism>
    <name type="scientific">Passalora fulva</name>
    <name type="common">Tomato leaf mold</name>
    <name type="synonym">Cladosporium fulvum</name>
    <dbReference type="NCBI Taxonomy" id="5499"/>
    <lineage>
        <taxon>Eukaryota</taxon>
        <taxon>Fungi</taxon>
        <taxon>Dikarya</taxon>
        <taxon>Ascomycota</taxon>
        <taxon>Pezizomycotina</taxon>
        <taxon>Dothideomycetes</taxon>
        <taxon>Dothideomycetidae</taxon>
        <taxon>Mycosphaerellales</taxon>
        <taxon>Mycosphaerellaceae</taxon>
        <taxon>Fulvia</taxon>
    </lineage>
</organism>
<gene>
    <name evidence="6" type="primary">claA</name>
    <name type="ORF">Clafu184393</name>
</gene>
<comment type="function">
    <text evidence="4">Transcriptional coactivator; part of the gene cluster that mediates the biosynthesis of cladofulvin, a conidial pigment not required for virulence but that plays a role in fitness and resistance to environmental stresses including UV light and low-temperature stress. With claE, coregulates the production of cladofulvin.</text>
</comment>
<comment type="subcellular location">
    <subcellularLocation>
        <location evidence="7">Nucleus</location>
    </subcellularLocation>
</comment>
<comment type="induction">
    <text evidence="3 4 5">Expression is positively regulated by the transcriptional regulator wor1 (PubMed:24521437). Expression is down-regulated during biotrophic growth within tomato leaves (PubMed:27997759). The expression is induced at later stages of infection when conidiophores emerge from the plant and produce conidia (PubMed:24465762).</text>
</comment>
<reference key="1">
    <citation type="journal article" date="2014" name="Mol. Microbiol.">
        <title>Functional analysis of the conserved transcriptional regulator CfWor1 in Cladosporium fulvum reveals diverse roles in the virulence of plant pathogenic fungi.</title>
        <authorList>
            <person name="Okmen B."/>
            <person name="Collemare J."/>
            <person name="Griffiths S."/>
            <person name="van der Burgt A."/>
            <person name="Cox R."/>
            <person name="de Wit P.J."/>
        </authorList>
    </citation>
    <scope>INDUCTION</scope>
</reference>
<reference key="2">
    <citation type="journal article" date="2014" name="PLoS ONE">
        <title>Secondary metabolism and biotrophic lifestyle in the tomato pathogen Cladosporium fulvum.</title>
        <authorList>
            <person name="Collemare J."/>
            <person name="Griffiths S."/>
            <person name="Iida Y."/>
            <person name="Karimi Jashni M."/>
            <person name="Battaglia E."/>
            <person name="Cox R.J."/>
            <person name="de Wit P.J."/>
        </authorList>
    </citation>
    <scope>IDENTIFICATION</scope>
    <scope>FUNCTION</scope>
    <scope>INDUCTION</scope>
</reference>
<reference key="3">
    <citation type="journal article" date="2016" name="Proc. Natl. Acad. Sci. U.S.A.">
        <title>Elucidation of cladofulvin biosynthesis reveals a cytochrome P450 monooxygenase required for anthraquinone dimerization.</title>
        <authorList>
            <person name="Griffiths S."/>
            <person name="Mesarich C.H."/>
            <person name="Saccomanno B."/>
            <person name="Vaisberg A."/>
            <person name="De Wit P.J."/>
            <person name="Cox R."/>
            <person name="Collemare J."/>
        </authorList>
    </citation>
    <scope>FUNCTION</scope>
</reference>
<reference key="4">
    <citation type="journal article" date="2018" name="Mol. Plant Pathol.">
        <title>Down-regulation of cladofulvin biosynthesis is required for biotrophic growth of Cladosporium fulvum on tomato.</title>
        <authorList>
            <person name="Griffiths S."/>
            <person name="Mesarich C.H."/>
            <person name="Overdijk E.J.R."/>
            <person name="Saccomanno B."/>
            <person name="de Wit P.J.G.M."/>
            <person name="Collemare J."/>
        </authorList>
    </citation>
    <scope>INDUCTION</scope>
</reference>
<evidence type="ECO:0000255" key="1">
    <source>
        <dbReference type="PROSITE-ProRule" id="PRU00393"/>
    </source>
</evidence>
<evidence type="ECO:0000256" key="2">
    <source>
        <dbReference type="SAM" id="MobiDB-lite"/>
    </source>
</evidence>
<evidence type="ECO:0000269" key="3">
    <source>
    </source>
</evidence>
<evidence type="ECO:0000269" key="4">
    <source>
    </source>
</evidence>
<evidence type="ECO:0000269" key="5">
    <source>
    </source>
</evidence>
<evidence type="ECO:0000303" key="6">
    <source>
    </source>
</evidence>
<evidence type="ECO:0000305" key="7"/>
<accession>P0CU73</accession>
<proteinExistence type="evidence at transcript level"/>
<keyword id="KW-0238">DNA-binding</keyword>
<keyword id="KW-0539">Nucleus</keyword>
<keyword id="KW-0804">Transcription</keyword>
<keyword id="KW-0805">Transcription regulation</keyword>